<organism>
    <name type="scientific">Rhizobium meliloti (strain 1021)</name>
    <name type="common">Ensifer meliloti</name>
    <name type="synonym">Sinorhizobium meliloti</name>
    <dbReference type="NCBI Taxonomy" id="266834"/>
    <lineage>
        <taxon>Bacteria</taxon>
        <taxon>Pseudomonadati</taxon>
        <taxon>Pseudomonadota</taxon>
        <taxon>Alphaproteobacteria</taxon>
        <taxon>Hyphomicrobiales</taxon>
        <taxon>Rhizobiaceae</taxon>
        <taxon>Sinorhizobium/Ensifer group</taxon>
        <taxon>Sinorhizobium</taxon>
    </lineage>
</organism>
<comment type="function">
    <text evidence="1">Part of a stress-induced multi-chaperone system, it is involved in the recovery of the cell from heat-induced damage, in cooperation with DnaK, DnaJ and GrpE. Acts before DnaK, in the processing of protein aggregates. Protein binding stimulates the ATPase activity; ATP hydrolysis unfolds the denatured protein aggregates, which probably helps expose new hydrophobic binding sites on the surface of ClpB-bound aggregates, contributing to the solubilization and refolding of denatured protein aggregates by DnaK (By similarity).</text>
</comment>
<comment type="subunit">
    <text evidence="1">Homohexamer. The oligomerization is ATP-dependent (By similarity).</text>
</comment>
<comment type="subcellular location">
    <subcellularLocation>
        <location evidence="3">Cytoplasm</location>
    </subcellularLocation>
</comment>
<comment type="domain">
    <text evidence="1">The Clp repeat (R) domain probably functions as a substrate-discriminating domain, recruiting aggregated proteins to the ClpB hexamer and/or stabilizing bound proteins. The NBD2 domain is responsible for oligomerization, whereas the NBD1 domain stabilizes the hexamer probably in an ATP-dependent manner. The movement of the coiled-coil domain is essential for ClpB ability to rescue proteins from an aggregated state, probably by pulling apart large aggregated proteins, which are bound between the coiled-coils motifs of adjacent ClpB subunits in the functional hexamer (By similarity).</text>
</comment>
<comment type="similarity">
    <text evidence="3">Belongs to the ClpA/ClpB family.</text>
</comment>
<sequence length="868" mass="95671">MDIEKYSERVRGFLQSAQTYALAEGHQQFTPEHVLKVLLDDDQGMAASLIERAGGNAREAKVGTAAALAKLPKVTGGNGSVYLSQPLAKVFTAAEDAAKKAGDSFVTVERLLLALAIESSAATASILSKAGVTPTKLNQVINEIRKGRTADSANAEQGFDSLKKYARDLTAEAREGKLDPVIGRDDEIRRTIQVLSRRTKNNPVLIGEPGVGKTAIAEGLALRIVNGDVPESLKDKRLMALDMGALIAGAKFRGEFEERLKAVLNEVRSEGGEIILFIDEMHTLVGAGKADGAMDASNLLKPALARGELHCVGATTLDEYRKHVEKDAALARRFQPVMVEEPTVEDTISILRGLKEKYEQHHKVRISDSALVAAAALSNRYITDRFLPDKAIDLMDEAASRLRMQVDSKPEELDELDRRVIQLKIEREALKKETDVSSKDRLAKLELDLSSLEEEAAALTARWQAEKQKLGQAADLKKQLDEARNELQIAQRKGEFQRAGELAYGVIPNLEKELAEAESQDGASANPMVQEVVTPDNIAHIVSRWTGIPVDKMLEGERDKLLRMEDELAKWVVGQGDAVQAVSRAVRRSRAGLQDPNRPIGSFIFLGPTGVGKTELTKALARFLFDDETALMRIDMSEYMEKHSVARLIGAPPGYVGYEEGGALTESVRRRPYQVVLFDEIEKAHPDVFNVLLQVLDDGRLTDGQGRTVDFKNTMIIMTSNLGAEYLTALGENEDSDAVRDQVMEVVRAAFRPEFLNRVDEIILFHRLRRSEMGAIVDIQLERLRKLLSDRKITLELEDDARVFLADRGYDPAYGARPLKRAIQKYVQDPLAEKVLQGEFPDGSVIKVVAGSDRLNFKRGAGANKEAA</sequence>
<reference key="1">
    <citation type="journal article" date="2001" name="Proc. Natl. Acad. Sci. U.S.A.">
        <title>Analysis of the chromosome sequence of the legume symbiont Sinorhizobium meliloti strain 1021.</title>
        <authorList>
            <person name="Capela D."/>
            <person name="Barloy-Hubler F."/>
            <person name="Gouzy J."/>
            <person name="Bothe G."/>
            <person name="Ampe F."/>
            <person name="Batut J."/>
            <person name="Boistard P."/>
            <person name="Becker A."/>
            <person name="Boutry M."/>
            <person name="Cadieu E."/>
            <person name="Dreano S."/>
            <person name="Gloux S."/>
            <person name="Godrie T."/>
            <person name="Goffeau A."/>
            <person name="Kahn D."/>
            <person name="Kiss E."/>
            <person name="Lelaure V."/>
            <person name="Masuy D."/>
            <person name="Pohl T."/>
            <person name="Portetelle D."/>
            <person name="Puehler A."/>
            <person name="Purnelle B."/>
            <person name="Ramsperger U."/>
            <person name="Renard C."/>
            <person name="Thebault P."/>
            <person name="Vandenbol M."/>
            <person name="Weidner S."/>
            <person name="Galibert F."/>
        </authorList>
    </citation>
    <scope>NUCLEOTIDE SEQUENCE [LARGE SCALE GENOMIC DNA]</scope>
    <source>
        <strain>1021</strain>
    </source>
</reference>
<reference key="2">
    <citation type="journal article" date="2001" name="Science">
        <title>The composite genome of the legume symbiont Sinorhizobium meliloti.</title>
        <authorList>
            <person name="Galibert F."/>
            <person name="Finan T.M."/>
            <person name="Long S.R."/>
            <person name="Puehler A."/>
            <person name="Abola P."/>
            <person name="Ampe F."/>
            <person name="Barloy-Hubler F."/>
            <person name="Barnett M.J."/>
            <person name="Becker A."/>
            <person name="Boistard P."/>
            <person name="Bothe G."/>
            <person name="Boutry M."/>
            <person name="Bowser L."/>
            <person name="Buhrmester J."/>
            <person name="Cadieu E."/>
            <person name="Capela D."/>
            <person name="Chain P."/>
            <person name="Cowie A."/>
            <person name="Davis R.W."/>
            <person name="Dreano S."/>
            <person name="Federspiel N.A."/>
            <person name="Fisher R.F."/>
            <person name="Gloux S."/>
            <person name="Godrie T."/>
            <person name="Goffeau A."/>
            <person name="Golding B."/>
            <person name="Gouzy J."/>
            <person name="Gurjal M."/>
            <person name="Hernandez-Lucas I."/>
            <person name="Hong A."/>
            <person name="Huizar L."/>
            <person name="Hyman R.W."/>
            <person name="Jones T."/>
            <person name="Kahn D."/>
            <person name="Kahn M.L."/>
            <person name="Kalman S."/>
            <person name="Keating D.H."/>
            <person name="Kiss E."/>
            <person name="Komp C."/>
            <person name="Lelaure V."/>
            <person name="Masuy D."/>
            <person name="Palm C."/>
            <person name="Peck M.C."/>
            <person name="Pohl T.M."/>
            <person name="Portetelle D."/>
            <person name="Purnelle B."/>
            <person name="Ramsperger U."/>
            <person name="Surzycki R."/>
            <person name="Thebault P."/>
            <person name="Vandenbol M."/>
            <person name="Vorhoelter F.J."/>
            <person name="Weidner S."/>
            <person name="Wells D.H."/>
            <person name="Wong K."/>
            <person name="Yeh K.-C."/>
            <person name="Batut J."/>
        </authorList>
    </citation>
    <scope>NUCLEOTIDE SEQUENCE [LARGE SCALE GENOMIC DNA]</scope>
    <source>
        <strain>1021</strain>
    </source>
</reference>
<protein>
    <recommendedName>
        <fullName>Chaperone protein ClpB</fullName>
    </recommendedName>
</protein>
<accession>Q92MK7</accession>
<gene>
    <name type="primary">clpB</name>
    <name type="ordered locus">R02608</name>
    <name type="ORF">SMc02433</name>
</gene>
<name>CLPB_RHIME</name>
<feature type="chain" id="PRO_0000191166" description="Chaperone protein ClpB">
    <location>
        <begin position="1"/>
        <end position="868"/>
    </location>
</feature>
<feature type="domain" description="Clp R" evidence="2">
    <location>
        <begin position="3"/>
        <end position="147"/>
    </location>
</feature>
<feature type="region of interest" description="Repeat 1" evidence="2">
    <location>
        <begin position="6"/>
        <end position="71"/>
    </location>
</feature>
<feature type="region of interest" description="Repeat 2" evidence="2">
    <location>
        <begin position="83"/>
        <end position="147"/>
    </location>
</feature>
<feature type="region of interest" description="NBD1" evidence="1">
    <location>
        <begin position="160"/>
        <end position="341"/>
    </location>
</feature>
<feature type="region of interest" description="Linker" evidence="1">
    <location>
        <begin position="342"/>
        <end position="547"/>
    </location>
</feature>
<feature type="region of interest" description="NBD2" evidence="1">
    <location>
        <begin position="557"/>
        <end position="767"/>
    </location>
</feature>
<feature type="region of interest" description="C-terminal" evidence="1">
    <location>
        <begin position="768"/>
        <end position="868"/>
    </location>
</feature>
<feature type="coiled-coil region" evidence="1">
    <location>
        <begin position="392"/>
        <end position="526"/>
    </location>
</feature>
<feature type="binding site" evidence="1">
    <location>
        <begin position="207"/>
        <end position="214"/>
    </location>
    <ligand>
        <name>ATP</name>
        <dbReference type="ChEBI" id="CHEBI:30616"/>
        <label>1</label>
    </ligand>
</feature>
<feature type="binding site" evidence="1">
    <location>
        <begin position="607"/>
        <end position="614"/>
    </location>
    <ligand>
        <name>ATP</name>
        <dbReference type="ChEBI" id="CHEBI:30616"/>
        <label>2</label>
    </ligand>
</feature>
<proteinExistence type="inferred from homology"/>
<evidence type="ECO:0000250" key="1"/>
<evidence type="ECO:0000255" key="2">
    <source>
        <dbReference type="PROSITE-ProRule" id="PRU01251"/>
    </source>
</evidence>
<evidence type="ECO:0000305" key="3"/>
<dbReference type="EMBL" id="AL591688">
    <property type="protein sequence ID" value="CAC47187.1"/>
    <property type="molecule type" value="Genomic_DNA"/>
</dbReference>
<dbReference type="RefSeq" id="NP_386714.1">
    <property type="nucleotide sequence ID" value="NC_003047.1"/>
</dbReference>
<dbReference type="RefSeq" id="WP_010970072.1">
    <property type="nucleotide sequence ID" value="NC_003047.1"/>
</dbReference>
<dbReference type="SMR" id="Q92MK7"/>
<dbReference type="EnsemblBacteria" id="CAC47187">
    <property type="protein sequence ID" value="CAC47187"/>
    <property type="gene ID" value="SMc02433"/>
</dbReference>
<dbReference type="GeneID" id="89577013"/>
<dbReference type="KEGG" id="sme:SMc02433"/>
<dbReference type="PATRIC" id="fig|266834.11.peg.4106"/>
<dbReference type="eggNOG" id="COG0542">
    <property type="taxonomic scope" value="Bacteria"/>
</dbReference>
<dbReference type="HOGENOM" id="CLU_005070_4_2_5"/>
<dbReference type="OrthoDB" id="9803641at2"/>
<dbReference type="Proteomes" id="UP000001976">
    <property type="component" value="Chromosome"/>
</dbReference>
<dbReference type="GO" id="GO:0005737">
    <property type="term" value="C:cytoplasm"/>
    <property type="evidence" value="ECO:0007669"/>
    <property type="project" value="UniProtKB-SubCell"/>
</dbReference>
<dbReference type="GO" id="GO:0005524">
    <property type="term" value="F:ATP binding"/>
    <property type="evidence" value="ECO:0007669"/>
    <property type="project" value="UniProtKB-KW"/>
</dbReference>
<dbReference type="GO" id="GO:0016887">
    <property type="term" value="F:ATP hydrolysis activity"/>
    <property type="evidence" value="ECO:0007669"/>
    <property type="project" value="InterPro"/>
</dbReference>
<dbReference type="GO" id="GO:0034605">
    <property type="term" value="P:cellular response to heat"/>
    <property type="evidence" value="ECO:0007669"/>
    <property type="project" value="TreeGrafter"/>
</dbReference>
<dbReference type="GO" id="GO:0042026">
    <property type="term" value="P:protein refolding"/>
    <property type="evidence" value="ECO:0007669"/>
    <property type="project" value="InterPro"/>
</dbReference>
<dbReference type="CDD" id="cd00009">
    <property type="entry name" value="AAA"/>
    <property type="match status" value="1"/>
</dbReference>
<dbReference type="CDD" id="cd19499">
    <property type="entry name" value="RecA-like_ClpB_Hsp104-like"/>
    <property type="match status" value="1"/>
</dbReference>
<dbReference type="FunFam" id="1.10.8.60:FF:000017">
    <property type="entry name" value="ATP-dependent chaperone ClpB"/>
    <property type="match status" value="1"/>
</dbReference>
<dbReference type="FunFam" id="3.40.50.300:FF:000120">
    <property type="entry name" value="ATP-dependent chaperone ClpB"/>
    <property type="match status" value="1"/>
</dbReference>
<dbReference type="FunFam" id="3.40.50.300:FF:000025">
    <property type="entry name" value="ATP-dependent Clp protease subunit"/>
    <property type="match status" value="1"/>
</dbReference>
<dbReference type="FunFam" id="3.40.50.300:FF:000010">
    <property type="entry name" value="Chaperone clpB 1, putative"/>
    <property type="match status" value="1"/>
</dbReference>
<dbReference type="Gene3D" id="1.10.8.60">
    <property type="match status" value="1"/>
</dbReference>
<dbReference type="Gene3D" id="1.10.1780.10">
    <property type="entry name" value="Clp, N-terminal domain"/>
    <property type="match status" value="1"/>
</dbReference>
<dbReference type="Gene3D" id="3.40.50.300">
    <property type="entry name" value="P-loop containing nucleotide triphosphate hydrolases"/>
    <property type="match status" value="3"/>
</dbReference>
<dbReference type="InterPro" id="IPR003593">
    <property type="entry name" value="AAA+_ATPase"/>
</dbReference>
<dbReference type="InterPro" id="IPR003959">
    <property type="entry name" value="ATPase_AAA_core"/>
</dbReference>
<dbReference type="InterPro" id="IPR017730">
    <property type="entry name" value="Chaperonin_ClpB"/>
</dbReference>
<dbReference type="InterPro" id="IPR019489">
    <property type="entry name" value="Clp_ATPase_C"/>
</dbReference>
<dbReference type="InterPro" id="IPR036628">
    <property type="entry name" value="Clp_N_dom_sf"/>
</dbReference>
<dbReference type="InterPro" id="IPR004176">
    <property type="entry name" value="Clp_R_dom"/>
</dbReference>
<dbReference type="InterPro" id="IPR001270">
    <property type="entry name" value="ClpA/B"/>
</dbReference>
<dbReference type="InterPro" id="IPR018368">
    <property type="entry name" value="ClpA/B_CS1"/>
</dbReference>
<dbReference type="InterPro" id="IPR028299">
    <property type="entry name" value="ClpA/B_CS2"/>
</dbReference>
<dbReference type="InterPro" id="IPR041546">
    <property type="entry name" value="ClpA/ClpB_AAA_lid"/>
</dbReference>
<dbReference type="InterPro" id="IPR050130">
    <property type="entry name" value="ClpA_ClpB"/>
</dbReference>
<dbReference type="InterPro" id="IPR027417">
    <property type="entry name" value="P-loop_NTPase"/>
</dbReference>
<dbReference type="NCBIfam" id="TIGR03346">
    <property type="entry name" value="chaperone_ClpB"/>
    <property type="match status" value="1"/>
</dbReference>
<dbReference type="PANTHER" id="PTHR11638">
    <property type="entry name" value="ATP-DEPENDENT CLP PROTEASE"/>
    <property type="match status" value="1"/>
</dbReference>
<dbReference type="PANTHER" id="PTHR11638:SF18">
    <property type="entry name" value="HEAT SHOCK PROTEIN 104"/>
    <property type="match status" value="1"/>
</dbReference>
<dbReference type="Pfam" id="PF00004">
    <property type="entry name" value="AAA"/>
    <property type="match status" value="1"/>
</dbReference>
<dbReference type="Pfam" id="PF07724">
    <property type="entry name" value="AAA_2"/>
    <property type="match status" value="1"/>
</dbReference>
<dbReference type="Pfam" id="PF17871">
    <property type="entry name" value="AAA_lid_9"/>
    <property type="match status" value="1"/>
</dbReference>
<dbReference type="Pfam" id="PF02861">
    <property type="entry name" value="Clp_N"/>
    <property type="match status" value="2"/>
</dbReference>
<dbReference type="Pfam" id="PF10431">
    <property type="entry name" value="ClpB_D2-small"/>
    <property type="match status" value="1"/>
</dbReference>
<dbReference type="PRINTS" id="PR00300">
    <property type="entry name" value="CLPPROTEASEA"/>
</dbReference>
<dbReference type="SMART" id="SM00382">
    <property type="entry name" value="AAA"/>
    <property type="match status" value="2"/>
</dbReference>
<dbReference type="SMART" id="SM01086">
    <property type="entry name" value="ClpB_D2-small"/>
    <property type="match status" value="1"/>
</dbReference>
<dbReference type="SUPFAM" id="SSF81923">
    <property type="entry name" value="Double Clp-N motif"/>
    <property type="match status" value="1"/>
</dbReference>
<dbReference type="SUPFAM" id="SSF52540">
    <property type="entry name" value="P-loop containing nucleoside triphosphate hydrolases"/>
    <property type="match status" value="2"/>
</dbReference>
<dbReference type="PROSITE" id="PS51903">
    <property type="entry name" value="CLP_R"/>
    <property type="match status" value="1"/>
</dbReference>
<dbReference type="PROSITE" id="PS00870">
    <property type="entry name" value="CLPAB_1"/>
    <property type="match status" value="1"/>
</dbReference>
<dbReference type="PROSITE" id="PS00871">
    <property type="entry name" value="CLPAB_2"/>
    <property type="match status" value="1"/>
</dbReference>
<keyword id="KW-0067">ATP-binding</keyword>
<keyword id="KW-0143">Chaperone</keyword>
<keyword id="KW-0175">Coiled coil</keyword>
<keyword id="KW-0963">Cytoplasm</keyword>
<keyword id="KW-0547">Nucleotide-binding</keyword>
<keyword id="KW-1185">Reference proteome</keyword>
<keyword id="KW-0677">Repeat</keyword>
<keyword id="KW-0346">Stress response</keyword>